<gene>
    <name evidence="12" type="primary">WASHC4</name>
    <name evidence="12" type="synonym">KIAA1033</name>
</gene>
<dbReference type="EMBL" id="AB028956">
    <property type="protein sequence ID" value="BAA82985.1"/>
    <property type="status" value="ALT_INIT"/>
    <property type="molecule type" value="mRNA"/>
</dbReference>
<dbReference type="EMBL" id="AK001657">
    <property type="protein sequence ID" value="BAA91816.1"/>
    <property type="molecule type" value="mRNA"/>
</dbReference>
<dbReference type="EMBL" id="BC031358">
    <property type="protein sequence ID" value="AAH31358.1"/>
    <property type="molecule type" value="mRNA"/>
</dbReference>
<dbReference type="EMBL" id="AC016257">
    <property type="status" value="NOT_ANNOTATED_CDS"/>
    <property type="molecule type" value="Genomic_DNA"/>
</dbReference>
<dbReference type="EMBL" id="BC040936">
    <property type="protein sequence ID" value="AAH40936.1"/>
    <property type="molecule type" value="mRNA"/>
</dbReference>
<dbReference type="EMBL" id="BC104992">
    <property type="protein sequence ID" value="AAI04993.1"/>
    <property type="molecule type" value="mRNA"/>
</dbReference>
<dbReference type="EMBL" id="BC104994">
    <property type="protein sequence ID" value="AAI04995.1"/>
    <property type="molecule type" value="mRNA"/>
</dbReference>
<dbReference type="EMBL" id="BC110850">
    <property type="protein sequence ID" value="AAI10851.1"/>
    <property type="status" value="ALT_SEQ"/>
    <property type="molecule type" value="mRNA"/>
</dbReference>
<dbReference type="CCDS" id="CCDS41826.1">
    <molecule id="Q2M389-1"/>
</dbReference>
<dbReference type="RefSeq" id="NP_001280569.1">
    <property type="nucleotide sequence ID" value="NM_001293640.1"/>
</dbReference>
<dbReference type="RefSeq" id="NP_056090.1">
    <molecule id="Q2M389-1"/>
    <property type="nucleotide sequence ID" value="NM_015275.3"/>
</dbReference>
<dbReference type="BioGRID" id="116913">
    <property type="interactions" value="116"/>
</dbReference>
<dbReference type="ComplexPortal" id="CPX-1163">
    <property type="entry name" value="WASH complex, variant WASHC1/WASHC2C"/>
</dbReference>
<dbReference type="ComplexPortal" id="CPX-1168">
    <property type="entry name" value="WASH complex, variant WASH2P/WASHC2C"/>
</dbReference>
<dbReference type="ComplexPortal" id="CPX-1169">
    <property type="entry name" value="WASH complex, variant WASH3P/WASHC2C"/>
</dbReference>
<dbReference type="ComplexPortal" id="CPX-1170">
    <property type="entry name" value="WASH complex, variant WASH4P/WASHC2C"/>
</dbReference>
<dbReference type="ComplexPortal" id="CPX-1171">
    <property type="entry name" value="WASH complex, variant WASH6P/WASHC2C"/>
</dbReference>
<dbReference type="ComplexPortal" id="CPX-1172">
    <property type="entry name" value="WASH complex, variant WASHC1/WASHC2A"/>
</dbReference>
<dbReference type="ComplexPortal" id="CPX-1173">
    <property type="entry name" value="WASH complex, variant WASH2P/WASHC2A"/>
</dbReference>
<dbReference type="ComplexPortal" id="CPX-1174">
    <property type="entry name" value="WASH complex, variant WASH3P/WASHC2A"/>
</dbReference>
<dbReference type="ComplexPortal" id="CPX-1175">
    <property type="entry name" value="WASH complex, variant WASH4P/WASHC2A"/>
</dbReference>
<dbReference type="ComplexPortal" id="CPX-1176">
    <property type="entry name" value="WASH complex, variant WASH6P/WASHC2A"/>
</dbReference>
<dbReference type="CORUM" id="Q2M389"/>
<dbReference type="FunCoup" id="Q2M389">
    <property type="interactions" value="3383"/>
</dbReference>
<dbReference type="IntAct" id="Q2M389">
    <property type="interactions" value="43"/>
</dbReference>
<dbReference type="MINT" id="Q2M389"/>
<dbReference type="STRING" id="9606.ENSP00000484713"/>
<dbReference type="TCDB" id="9.A.3.1.2">
    <property type="family name" value="the sorting nexin27 (snx27)-retromer assembly apparatus (retromeraa) family"/>
</dbReference>
<dbReference type="GlyGen" id="Q2M389">
    <property type="glycosylation" value="1 site, 1 O-linked glycan (1 site)"/>
</dbReference>
<dbReference type="iPTMnet" id="Q2M389"/>
<dbReference type="PhosphoSitePlus" id="Q2M389"/>
<dbReference type="SwissPalm" id="Q2M389"/>
<dbReference type="BioMuta" id="WASHC4"/>
<dbReference type="DMDM" id="296452861"/>
<dbReference type="jPOST" id="Q2M389"/>
<dbReference type="MassIVE" id="Q2M389"/>
<dbReference type="PaxDb" id="9606-ENSP00000484713"/>
<dbReference type="PeptideAtlas" id="Q2M389"/>
<dbReference type="ProteomicsDB" id="61366">
    <molecule id="Q2M389-1"/>
</dbReference>
<dbReference type="ProteomicsDB" id="61367">
    <molecule id="Q2M389-2"/>
</dbReference>
<dbReference type="Pumba" id="Q2M389"/>
<dbReference type="Antibodypedia" id="56699">
    <property type="antibodies" value="40 antibodies from 14 providers"/>
</dbReference>
<dbReference type="DNASU" id="23325"/>
<dbReference type="Ensembl" id="ENST00000332180.10">
    <molecule id="Q2M389-1"/>
    <property type="protein sequence ID" value="ENSP00000328062.6"/>
    <property type="gene ID" value="ENSG00000136051.15"/>
</dbReference>
<dbReference type="GeneID" id="23325"/>
<dbReference type="KEGG" id="hsa:23325"/>
<dbReference type="MANE-Select" id="ENST00000332180.10">
    <property type="protein sequence ID" value="ENSP00000328062.6"/>
    <property type="RefSeq nucleotide sequence ID" value="NM_015275.3"/>
    <property type="RefSeq protein sequence ID" value="NP_056090.1"/>
</dbReference>
<dbReference type="UCSC" id="uc001tld.4">
    <molecule id="Q2M389-1"/>
    <property type="organism name" value="human"/>
</dbReference>
<dbReference type="AGR" id="HGNC:29174"/>
<dbReference type="CTD" id="23325"/>
<dbReference type="DisGeNET" id="23325"/>
<dbReference type="GeneCards" id="WASHC4"/>
<dbReference type="HGNC" id="HGNC:29174">
    <property type="gene designation" value="WASHC4"/>
</dbReference>
<dbReference type="HPA" id="ENSG00000136051">
    <property type="expression patterns" value="Low tissue specificity"/>
</dbReference>
<dbReference type="MalaCards" id="WASHC4"/>
<dbReference type="MIM" id="615748">
    <property type="type" value="gene"/>
</dbReference>
<dbReference type="MIM" id="615817">
    <property type="type" value="phenotype"/>
</dbReference>
<dbReference type="neXtProt" id="NX_Q2M389"/>
<dbReference type="OpenTargets" id="ENSG00000136051"/>
<dbReference type="Orphanet" id="88616">
    <property type="disease" value="Autosomal recessive non-syndromic intellectual disability"/>
</dbReference>
<dbReference type="PharmGKB" id="PA128394626"/>
<dbReference type="VEuPathDB" id="HostDB:ENSG00000136051"/>
<dbReference type="eggNOG" id="KOG3578">
    <property type="taxonomic scope" value="Eukaryota"/>
</dbReference>
<dbReference type="GeneTree" id="ENSGT00390000002524"/>
<dbReference type="InParanoid" id="Q2M389"/>
<dbReference type="OrthoDB" id="10261210at2759"/>
<dbReference type="PAN-GO" id="Q2M389">
    <property type="GO annotations" value="4 GO annotations based on evolutionary models"/>
</dbReference>
<dbReference type="PhylomeDB" id="Q2M389"/>
<dbReference type="TreeFam" id="TF324604"/>
<dbReference type="PathwayCommons" id="Q2M389"/>
<dbReference type="SignaLink" id="Q2M389"/>
<dbReference type="SIGNOR" id="Q2M389"/>
<dbReference type="BioGRID-ORCS" id="23325">
    <property type="hits" value="46 hits in 1107 CRISPR screens"/>
</dbReference>
<dbReference type="CD-CODE" id="FB4E32DD">
    <property type="entry name" value="Presynaptic clusters and postsynaptic densities"/>
</dbReference>
<dbReference type="ChiTaRS" id="KIAA1033">
    <property type="organism name" value="human"/>
</dbReference>
<dbReference type="GenomeRNAi" id="23325"/>
<dbReference type="Pharos" id="Q2M389">
    <property type="development level" value="Tdark"/>
</dbReference>
<dbReference type="PRO" id="PR:Q2M389"/>
<dbReference type="Proteomes" id="UP000005640">
    <property type="component" value="Chromosome 12"/>
</dbReference>
<dbReference type="RNAct" id="Q2M389">
    <property type="molecule type" value="protein"/>
</dbReference>
<dbReference type="Bgee" id="ENSG00000136051">
    <property type="expression patterns" value="Expressed in secondary oocyte and 211 other cell types or tissues"/>
</dbReference>
<dbReference type="ExpressionAtlas" id="Q2M389">
    <property type="expression patterns" value="baseline and differential"/>
</dbReference>
<dbReference type="GO" id="GO:0031901">
    <property type="term" value="C:early endosome membrane"/>
    <property type="evidence" value="ECO:0000303"/>
    <property type="project" value="ComplexPortal"/>
</dbReference>
<dbReference type="GO" id="GO:0005768">
    <property type="term" value="C:endosome"/>
    <property type="evidence" value="ECO:0000314"/>
    <property type="project" value="MGI"/>
</dbReference>
<dbReference type="GO" id="GO:0005654">
    <property type="term" value="C:nucleoplasm"/>
    <property type="evidence" value="ECO:0000314"/>
    <property type="project" value="HPA"/>
</dbReference>
<dbReference type="GO" id="GO:0071203">
    <property type="term" value="C:WASH complex"/>
    <property type="evidence" value="ECO:0000314"/>
    <property type="project" value="UniProtKB"/>
</dbReference>
<dbReference type="GO" id="GO:0050890">
    <property type="term" value="P:cognition"/>
    <property type="evidence" value="ECO:0007669"/>
    <property type="project" value="Ensembl"/>
</dbReference>
<dbReference type="GO" id="GO:0140894">
    <property type="term" value="P:endolysosomal toll-like receptor signaling pathway"/>
    <property type="evidence" value="ECO:0007669"/>
    <property type="project" value="Ensembl"/>
</dbReference>
<dbReference type="GO" id="GO:0016197">
    <property type="term" value="P:endosomal transport"/>
    <property type="evidence" value="ECO:0000315"/>
    <property type="project" value="MGI"/>
</dbReference>
<dbReference type="GO" id="GO:0007032">
    <property type="term" value="P:endosome organization"/>
    <property type="evidence" value="ECO:0000315"/>
    <property type="project" value="UniProtKB"/>
</dbReference>
<dbReference type="GO" id="GO:0050905">
    <property type="term" value="P:neuromuscular process"/>
    <property type="evidence" value="ECO:0007669"/>
    <property type="project" value="Ensembl"/>
</dbReference>
<dbReference type="GO" id="GO:0140591">
    <property type="term" value="P:nuclear envelope budding"/>
    <property type="evidence" value="ECO:0000250"/>
    <property type="project" value="FlyBase"/>
</dbReference>
<dbReference type="GO" id="GO:0015031">
    <property type="term" value="P:protein transport"/>
    <property type="evidence" value="ECO:0007669"/>
    <property type="project" value="UniProtKB-KW"/>
</dbReference>
<dbReference type="GO" id="GO:0034315">
    <property type="term" value="P:regulation of Arp2/3 complex-mediated actin nucleation"/>
    <property type="evidence" value="ECO:0000303"/>
    <property type="project" value="ComplexPortal"/>
</dbReference>
<dbReference type="GO" id="GO:0061635">
    <property type="term" value="P:regulation of protein complex stability"/>
    <property type="evidence" value="ECO:0007669"/>
    <property type="project" value="Ensembl"/>
</dbReference>
<dbReference type="InterPro" id="IPR028191">
    <property type="entry name" value="WASH-4_N"/>
</dbReference>
<dbReference type="InterPro" id="IPR028283">
    <property type="entry name" value="WASH-7_C"/>
</dbReference>
<dbReference type="InterPro" id="IPR028282">
    <property type="entry name" value="WASH-7_central"/>
</dbReference>
<dbReference type="InterPro" id="IPR027307">
    <property type="entry name" value="WASH7"/>
</dbReference>
<dbReference type="PANTHER" id="PTHR31409">
    <property type="entry name" value="WASH COMPLEX SUBUNIT 4"/>
    <property type="match status" value="1"/>
</dbReference>
<dbReference type="PANTHER" id="PTHR31409:SF0">
    <property type="entry name" value="WASH COMPLEX SUBUNIT 4"/>
    <property type="match status" value="1"/>
</dbReference>
<dbReference type="Pfam" id="PF14745">
    <property type="entry name" value="WASH-4_N"/>
    <property type="match status" value="1"/>
</dbReference>
<dbReference type="Pfam" id="PF14746">
    <property type="entry name" value="WASH-7_C"/>
    <property type="match status" value="1"/>
</dbReference>
<dbReference type="Pfam" id="PF14744">
    <property type="entry name" value="WASH-7_mid"/>
    <property type="match status" value="1"/>
</dbReference>
<organism>
    <name type="scientific">Homo sapiens</name>
    <name type="common">Human</name>
    <dbReference type="NCBI Taxonomy" id="9606"/>
    <lineage>
        <taxon>Eukaryota</taxon>
        <taxon>Metazoa</taxon>
        <taxon>Chordata</taxon>
        <taxon>Craniata</taxon>
        <taxon>Vertebrata</taxon>
        <taxon>Euteleostomi</taxon>
        <taxon>Mammalia</taxon>
        <taxon>Eutheria</taxon>
        <taxon>Euarchontoglires</taxon>
        <taxon>Primates</taxon>
        <taxon>Haplorrhini</taxon>
        <taxon>Catarrhini</taxon>
        <taxon>Hominidae</taxon>
        <taxon>Homo</taxon>
    </lineage>
</organism>
<name>WASC4_HUMAN</name>
<proteinExistence type="evidence at protein level"/>
<evidence type="ECO:0000255" key="1"/>
<evidence type="ECO:0000256" key="2">
    <source>
        <dbReference type="SAM" id="MobiDB-lite"/>
    </source>
</evidence>
<evidence type="ECO:0000269" key="3">
    <source>
    </source>
</evidence>
<evidence type="ECO:0000269" key="4">
    <source>
    </source>
</evidence>
<evidence type="ECO:0000269" key="5">
    <source>
    </source>
</evidence>
<evidence type="ECO:0000269" key="6">
    <source>
    </source>
</evidence>
<evidence type="ECO:0000269" key="7">
    <source>
    </source>
</evidence>
<evidence type="ECO:0000269" key="8">
    <source>
    </source>
</evidence>
<evidence type="ECO:0000303" key="9">
    <source>
    </source>
</evidence>
<evidence type="ECO:0000303" key="10">
    <source>
    </source>
</evidence>
<evidence type="ECO:0000305" key="11"/>
<evidence type="ECO:0000312" key="12">
    <source>
        <dbReference type="HGNC" id="HGNC:29174"/>
    </source>
</evidence>
<evidence type="ECO:0007744" key="13">
    <source>
    </source>
</evidence>
<evidence type="ECO:0007744" key="14">
    <source>
    </source>
</evidence>
<evidence type="ECO:0007744" key="15">
    <source>
    </source>
</evidence>
<protein>
    <recommendedName>
        <fullName evidence="12">WASH complex subunit 4</fullName>
    </recommendedName>
    <alternativeName>
        <fullName evidence="10">Strumpellin and WASH-interacting protein</fullName>
        <shortName evidence="10">SWIP</shortName>
    </alternativeName>
    <alternativeName>
        <fullName evidence="11">WASH complex subunit SWIP</fullName>
    </alternativeName>
</protein>
<comment type="function">
    <text evidence="5 6 10">Acts as a component of the WASH core complex that functions as a nucleation-promoting factor (NPF) at the surface of endosomes, where it recruits and activates the Arp2/3 complex to induce actin polymerization, playing a key role in the fission of tubules that serve as transport intermediates during endosome sorting.</text>
</comment>
<comment type="subunit">
    <text evidence="5 6 10">Component of the WASH core complex also described as WASH regulatory complex (SHRC) composed of WASH (WASHC1, WASH2P or WASH3P), WASHC2 (WASHC2A or WASHC2C), WASHC3, WASHC4 and WASHC5. The WASH core complex associates via WASHC2 with the F-actin-capping protein dimer (formed by CAPZA1, CAPZA2 or CAPZA3 and CAPZB) in a transient or substoichiometric manner which was initially described as WASH complex.</text>
</comment>
<comment type="interaction">
    <interactant intactId="EBI-2563783">
        <id>Q2M389</id>
    </interactant>
    <interactant intactId="EBI-25475859">
        <id>PRO_0000449620</id>
        <label>rep</label>
        <dbReference type="UniProtKB" id="P0DTD1"/>
    </interactant>
    <organismsDiffer>true</organismsDiffer>
    <experiments>3</experiments>
</comment>
<comment type="subcellular location">
    <subcellularLocation>
        <location evidence="8">Early endosome</location>
    </subcellularLocation>
</comment>
<comment type="alternative products">
    <event type="alternative splicing"/>
    <isoform>
        <id>Q2M389-1</id>
        <name>1</name>
        <sequence type="displayed"/>
    </isoform>
    <isoform>
        <id>Q2M389-2</id>
        <name>2</name>
        <sequence type="described" ref="VSP_024208 VSP_024209"/>
    </isoform>
</comment>
<comment type="disease" evidence="7">
    <disease id="DI-04069">
        <name>Intellectual developmental disorder, autosomal recessive 43</name>
        <acronym>MRT43</acronym>
        <description>A disorder characterized by significantly below average general intellectual functioning associated with impairments in adaptive behavior and manifested during the developmental period.</description>
        <dbReference type="MIM" id="615817"/>
    </disease>
    <text>The disease is caused by variants affecting the gene represented in this entry.</text>
</comment>
<comment type="similarity">
    <text evidence="11">Belongs to the SWIP family.</text>
</comment>
<comment type="caution">
    <text evidence="5 6">One study reported a nucleation-promoting factor (NPF) activity towards the Arp2/3 complex using partially purified samples of the WASH complex (PubMed:19922875). In another study, the in vitro reconstituted and purified recombinant WASH core complex, consisting of WASHC3, WASHC4, WASHC5, WASHC1 and the N-terminal residues 1-356 of WASHC2, did not show activity toward Arp2/3 complex (PubMed:20498093).</text>
</comment>
<comment type="sequence caution" evidence="11">
    <conflict type="miscellaneous discrepancy">
        <sequence resource="EMBL-CDS" id="AAI10851"/>
    </conflict>
    <text>Contaminating sequence. Potential poly-A sequence.</text>
</comment>
<comment type="sequence caution" evidence="11">
    <conflict type="erroneous initiation">
        <sequence resource="EMBL-CDS" id="BAA82985"/>
    </conflict>
    <text>Extended N-terminus.</text>
</comment>
<feature type="initiator methionine" description="Removed" evidence="13">
    <location>
        <position position="1"/>
    </location>
</feature>
<feature type="chain" id="PRO_0000282575" description="WASH complex subunit 4">
    <location>
        <begin position="2"/>
        <end position="1173"/>
    </location>
</feature>
<feature type="region of interest" description="Sufficient for interaction with WASHC5" evidence="6">
    <location>
        <begin position="705"/>
        <end position="1173"/>
    </location>
</feature>
<feature type="region of interest" description="Disordered" evidence="2">
    <location>
        <begin position="1142"/>
        <end position="1173"/>
    </location>
</feature>
<feature type="coiled-coil region" evidence="1">
    <location>
        <begin position="1135"/>
        <end position="1161"/>
    </location>
</feature>
<feature type="compositionally biased region" description="Basic and acidic residues" evidence="2">
    <location>
        <begin position="1142"/>
        <end position="1155"/>
    </location>
</feature>
<feature type="compositionally biased region" description="Polar residues" evidence="2">
    <location>
        <begin position="1157"/>
        <end position="1167"/>
    </location>
</feature>
<feature type="modified residue" description="N-acetylalanine" evidence="13">
    <location>
        <position position="2"/>
    </location>
</feature>
<feature type="modified residue" description="Phosphoserine" evidence="13">
    <location>
        <position position="7"/>
    </location>
</feature>
<feature type="modified residue" description="Phosphothreonine" evidence="15">
    <location>
        <position position="1154"/>
    </location>
</feature>
<feature type="splice variant" id="VSP_024208" description="In isoform 2." evidence="9">
    <original>VNFTYQFLKKKFY</original>
    <variation>KWAFTAWRGGPRL</variation>
    <location>
        <begin position="839"/>
        <end position="851"/>
    </location>
</feature>
<feature type="splice variant" id="VSP_024209" description="In isoform 2." evidence="9">
    <location>
        <begin position="852"/>
        <end position="1173"/>
    </location>
</feature>
<feature type="sequence variant" id="VAR_031417" description="In dbSNP:rs34434425.">
    <original>V</original>
    <variation>L</variation>
    <location>
        <position position="323"/>
    </location>
</feature>
<feature type="sequence variant" id="VAR_057825" description="In dbSNP:rs1345092.">
    <original>T</original>
    <variation>S</variation>
    <location>
        <position position="599"/>
    </location>
</feature>
<feature type="sequence variant" id="VAR_031418" description="In dbSNP:rs1663564." evidence="3 4 14">
    <original>V</original>
    <variation>I</variation>
    <location>
        <position position="901"/>
    </location>
</feature>
<feature type="sequence variant" id="VAR_071384" description="In MRT43; reduced expression of the protein; alters the WASH complex; dbSNP:rs587777411." evidence="7">
    <original>P</original>
    <variation>R</variation>
    <location>
        <position position="1019"/>
    </location>
</feature>
<feature type="sequence conflict" description="In Ref. 2; BAA91816." evidence="11" ref="2">
    <original>R</original>
    <variation>Q</variation>
    <location>
        <position position="293"/>
    </location>
</feature>
<feature type="sequence conflict" description="In Ref. 2; BAA91816." evidence="11" ref="2">
    <original>W</original>
    <variation>R</variation>
    <location>
        <position position="608"/>
    </location>
</feature>
<feature type="sequence conflict" description="In Ref. 2; BAA91816." evidence="11" ref="2">
    <original>T</original>
    <variation>A</variation>
    <location>
        <position position="759"/>
    </location>
</feature>
<keyword id="KW-0007">Acetylation</keyword>
<keyword id="KW-0025">Alternative splicing</keyword>
<keyword id="KW-0175">Coiled coil</keyword>
<keyword id="KW-0225">Disease variant</keyword>
<keyword id="KW-0967">Endosome</keyword>
<keyword id="KW-0991">Intellectual disability</keyword>
<keyword id="KW-0597">Phosphoprotein</keyword>
<keyword id="KW-0653">Protein transport</keyword>
<keyword id="KW-1267">Proteomics identification</keyword>
<keyword id="KW-1185">Reference proteome</keyword>
<keyword id="KW-0813">Transport</keyword>
<sequence>MAVETLSPDWEFDRVDDGSQKIHAEVQLKNYGKFLEEYTSQLRRIEDALDDSIGDVWDFNLDPIALKLLPYEQSSLLELIKTENKVLNKVITVYAALCCEIKKLKYEAETKFYNGLLFYGEGATDASMVEGDCQIQMGRFISFLQELSCFVTRCYEVVMNVVHQLAALYISNKIAPKIIETTGVHFQTMYEHLGELLTVLLTLDEIIDNHITLKDHWTMYKRLLKSVHHNPSKFGIQEEKLKPFEKFLLKLEGQLLDGMIFQACIEQQFDSLNGGVSVSKNSTFAEEFAHSIRSIFANVEAKLGEPSEIDQRDKYVGICGLFVLHFQIFRTIDKKFYKSLLDICKKVPAITLTANIIWFPDNFLIQKIPAAAKLLDRKSLQAIKIHRDTFLQQKAQSLTKDVQSYYVFVSSWMMKMESILSKEQRMDKFAEDLTNRCNVFIQGFLYAYSISTIIKTTMNLYMSMQKPMTKTSVKALCRLVELLKAIEHMFYRRSMVVADSVSHITQHLQHQALHSISVAKKRVISDKKYSEQRLDVLSALVLAENTLNGPSTKQRRLIVSLALSVGTQMKTFKDEELFPLQVVMKKLDLISELRERVQTQCDCCFLYWHRAVFPIYLDDVYENAVDAARLHYMFSALRDCVPAMMHARHLESYEILLDCYDKEIMEILNEHLLDKLCKEIEKDLRLSVHTHLKLDDRNPFKVGMKDLALFFSLNPIRFFNRFIDIRAYVTHYLDKTFYNLTTVALHDWATYSEMRNLATQRYGLVMTEAHLPSQTLEQGLDVLEIMRNIHIFVSRYLYNLNNQIFIERTSNNKHLNTINIRHIANSIRTHGTGIMNTTVNFTYQFLKKKFYIFSQFMYDEHIKSRLIKDIRFFREIKDQNDHKYPFDRAEKFNRGIRKLGVTPEGQSYLDQFRQLISQIGNAMGYVRMIRSGGLHCSSNAIRFVPDLEDIVNFEELVKEEGLAEETLKAARHLDSVLSDHTRNSAEGTEYFKMLVDVFAPEFRRPKNIHLRNFYIIVPPLTLNFVEHSISCKEKLNKKNKIGAAFTDDGFAMGVAYILKLLDQYREFDSLHWFQSVREKYLKEIRAVAKQQNVQSASQDEKLLQTMNLTQKRLDVYLQEFELLYFSLSSARIFFRADKTAAEENQEKKEKEEETKTSNGDLSDSTVSADPVVK</sequence>
<reference key="1">
    <citation type="journal article" date="1999" name="DNA Res.">
        <title>Prediction of the coding sequences of unidentified human genes. XIV. The complete sequences of 100 new cDNA clones from brain which code for large proteins in vitro.</title>
        <authorList>
            <person name="Kikuno R."/>
            <person name="Nagase T."/>
            <person name="Ishikawa K."/>
            <person name="Hirosawa M."/>
            <person name="Miyajima N."/>
            <person name="Tanaka A."/>
            <person name="Kotani H."/>
            <person name="Nomura N."/>
            <person name="Ohara O."/>
        </authorList>
    </citation>
    <scope>NUCLEOTIDE SEQUENCE [LARGE SCALE MRNA] (ISOFORM 1)</scope>
    <scope>VARIANT ILE-901</scope>
    <source>
        <tissue>Brain</tissue>
    </source>
</reference>
<reference key="2">
    <citation type="journal article" date="2004" name="Nat. Genet.">
        <title>Complete sequencing and characterization of 21,243 full-length human cDNAs.</title>
        <authorList>
            <person name="Ota T."/>
            <person name="Suzuki Y."/>
            <person name="Nishikawa T."/>
            <person name="Otsuki T."/>
            <person name="Sugiyama T."/>
            <person name="Irie R."/>
            <person name="Wakamatsu A."/>
            <person name="Hayashi K."/>
            <person name="Sato H."/>
            <person name="Nagai K."/>
            <person name="Kimura K."/>
            <person name="Makita H."/>
            <person name="Sekine M."/>
            <person name="Obayashi M."/>
            <person name="Nishi T."/>
            <person name="Shibahara T."/>
            <person name="Tanaka T."/>
            <person name="Ishii S."/>
            <person name="Yamamoto J."/>
            <person name="Saito K."/>
            <person name="Kawai Y."/>
            <person name="Isono Y."/>
            <person name="Nakamura Y."/>
            <person name="Nagahari K."/>
            <person name="Murakami K."/>
            <person name="Yasuda T."/>
            <person name="Iwayanagi T."/>
            <person name="Wagatsuma M."/>
            <person name="Shiratori A."/>
            <person name="Sudo H."/>
            <person name="Hosoiri T."/>
            <person name="Kaku Y."/>
            <person name="Kodaira H."/>
            <person name="Kondo H."/>
            <person name="Sugawara M."/>
            <person name="Takahashi M."/>
            <person name="Kanda K."/>
            <person name="Yokoi T."/>
            <person name="Furuya T."/>
            <person name="Kikkawa E."/>
            <person name="Omura Y."/>
            <person name="Abe K."/>
            <person name="Kamihara K."/>
            <person name="Katsuta N."/>
            <person name="Sato K."/>
            <person name="Tanikawa M."/>
            <person name="Yamazaki M."/>
            <person name="Ninomiya K."/>
            <person name="Ishibashi T."/>
            <person name="Yamashita H."/>
            <person name="Murakawa K."/>
            <person name="Fujimori K."/>
            <person name="Tanai H."/>
            <person name="Kimata M."/>
            <person name="Watanabe M."/>
            <person name="Hiraoka S."/>
            <person name="Chiba Y."/>
            <person name="Ishida S."/>
            <person name="Ono Y."/>
            <person name="Takiguchi S."/>
            <person name="Watanabe S."/>
            <person name="Yosida M."/>
            <person name="Hotuta T."/>
            <person name="Kusano J."/>
            <person name="Kanehori K."/>
            <person name="Takahashi-Fujii A."/>
            <person name="Hara H."/>
            <person name="Tanase T.-O."/>
            <person name="Nomura Y."/>
            <person name="Togiya S."/>
            <person name="Komai F."/>
            <person name="Hara R."/>
            <person name="Takeuchi K."/>
            <person name="Arita M."/>
            <person name="Imose N."/>
            <person name="Musashino K."/>
            <person name="Yuuki H."/>
            <person name="Oshima A."/>
            <person name="Sasaki N."/>
            <person name="Aotsuka S."/>
            <person name="Yoshikawa Y."/>
            <person name="Matsunawa H."/>
            <person name="Ichihara T."/>
            <person name="Shiohata N."/>
            <person name="Sano S."/>
            <person name="Moriya S."/>
            <person name="Momiyama H."/>
            <person name="Satoh N."/>
            <person name="Takami S."/>
            <person name="Terashima Y."/>
            <person name="Suzuki O."/>
            <person name="Nakagawa S."/>
            <person name="Senoh A."/>
            <person name="Mizoguchi H."/>
            <person name="Goto Y."/>
            <person name="Shimizu F."/>
            <person name="Wakebe H."/>
            <person name="Hishigaki H."/>
            <person name="Watanabe T."/>
            <person name="Sugiyama A."/>
            <person name="Takemoto M."/>
            <person name="Kawakami B."/>
            <person name="Yamazaki M."/>
            <person name="Watanabe K."/>
            <person name="Kumagai A."/>
            <person name="Itakura S."/>
            <person name="Fukuzumi Y."/>
            <person name="Fujimori Y."/>
            <person name="Komiyama M."/>
            <person name="Tashiro H."/>
            <person name="Tanigami A."/>
            <person name="Fujiwara T."/>
            <person name="Ono T."/>
            <person name="Yamada K."/>
            <person name="Fujii Y."/>
            <person name="Ozaki K."/>
            <person name="Hirao M."/>
            <person name="Ohmori Y."/>
            <person name="Kawabata A."/>
            <person name="Hikiji T."/>
            <person name="Kobatake N."/>
            <person name="Inagaki H."/>
            <person name="Ikema Y."/>
            <person name="Okamoto S."/>
            <person name="Okitani R."/>
            <person name="Kawakami T."/>
            <person name="Noguchi S."/>
            <person name="Itoh T."/>
            <person name="Shigeta K."/>
            <person name="Senba T."/>
            <person name="Matsumura K."/>
            <person name="Nakajima Y."/>
            <person name="Mizuno T."/>
            <person name="Morinaga M."/>
            <person name="Sasaki M."/>
            <person name="Togashi T."/>
            <person name="Oyama M."/>
            <person name="Hata H."/>
            <person name="Watanabe M."/>
            <person name="Komatsu T."/>
            <person name="Mizushima-Sugano J."/>
            <person name="Satoh T."/>
            <person name="Shirai Y."/>
            <person name="Takahashi Y."/>
            <person name="Nakagawa K."/>
            <person name="Okumura K."/>
            <person name="Nagase T."/>
            <person name="Nomura N."/>
            <person name="Kikuchi H."/>
            <person name="Masuho Y."/>
            <person name="Yamashita R."/>
            <person name="Nakai K."/>
            <person name="Yada T."/>
            <person name="Nakamura Y."/>
            <person name="Ohara O."/>
            <person name="Isogai T."/>
            <person name="Sugano S."/>
        </authorList>
    </citation>
    <scope>NUCLEOTIDE SEQUENCE [LARGE SCALE MRNA] (ISOFORM 2)</scope>
</reference>
<reference key="3">
    <citation type="journal article" date="2006" name="Nature">
        <title>The finished DNA sequence of human chromosome 12.</title>
        <authorList>
            <person name="Scherer S.E."/>
            <person name="Muzny D.M."/>
            <person name="Buhay C.J."/>
            <person name="Chen R."/>
            <person name="Cree A."/>
            <person name="Ding Y."/>
            <person name="Dugan-Rocha S."/>
            <person name="Gill R."/>
            <person name="Gunaratne P."/>
            <person name="Harris R.A."/>
            <person name="Hawes A.C."/>
            <person name="Hernandez J."/>
            <person name="Hodgson A.V."/>
            <person name="Hume J."/>
            <person name="Jackson A."/>
            <person name="Khan Z.M."/>
            <person name="Kovar-Smith C."/>
            <person name="Lewis L.R."/>
            <person name="Lozado R.J."/>
            <person name="Metzker M.L."/>
            <person name="Milosavljevic A."/>
            <person name="Miner G.R."/>
            <person name="Montgomery K.T."/>
            <person name="Morgan M.B."/>
            <person name="Nazareth L.V."/>
            <person name="Scott G."/>
            <person name="Sodergren E."/>
            <person name="Song X.-Z."/>
            <person name="Steffen D."/>
            <person name="Lovering R.C."/>
            <person name="Wheeler D.A."/>
            <person name="Worley K.C."/>
            <person name="Yuan Y."/>
            <person name="Zhang Z."/>
            <person name="Adams C.Q."/>
            <person name="Ansari-Lari M.A."/>
            <person name="Ayele M."/>
            <person name="Brown M.J."/>
            <person name="Chen G."/>
            <person name="Chen Z."/>
            <person name="Clerc-Blankenburg K.P."/>
            <person name="Davis C."/>
            <person name="Delgado O."/>
            <person name="Dinh H.H."/>
            <person name="Draper H."/>
            <person name="Gonzalez-Garay M.L."/>
            <person name="Havlak P."/>
            <person name="Jackson L.R."/>
            <person name="Jacob L.S."/>
            <person name="Kelly S.H."/>
            <person name="Li L."/>
            <person name="Li Z."/>
            <person name="Liu J."/>
            <person name="Liu W."/>
            <person name="Lu J."/>
            <person name="Maheshwari M."/>
            <person name="Nguyen B.-V."/>
            <person name="Okwuonu G.O."/>
            <person name="Pasternak S."/>
            <person name="Perez L.M."/>
            <person name="Plopper F.J.H."/>
            <person name="Santibanez J."/>
            <person name="Shen H."/>
            <person name="Tabor P.E."/>
            <person name="Verduzco D."/>
            <person name="Waldron L."/>
            <person name="Wang Q."/>
            <person name="Williams G.A."/>
            <person name="Zhang J."/>
            <person name="Zhou J."/>
            <person name="Allen C.C."/>
            <person name="Amin A.G."/>
            <person name="Anyalebechi V."/>
            <person name="Bailey M."/>
            <person name="Barbaria J.A."/>
            <person name="Bimage K.E."/>
            <person name="Bryant N.P."/>
            <person name="Burch P.E."/>
            <person name="Burkett C.E."/>
            <person name="Burrell K.L."/>
            <person name="Calderon E."/>
            <person name="Cardenas V."/>
            <person name="Carter K."/>
            <person name="Casias K."/>
            <person name="Cavazos I."/>
            <person name="Cavazos S.R."/>
            <person name="Ceasar H."/>
            <person name="Chacko J."/>
            <person name="Chan S.N."/>
            <person name="Chavez D."/>
            <person name="Christopoulos C."/>
            <person name="Chu J."/>
            <person name="Cockrell R."/>
            <person name="Cox C.D."/>
            <person name="Dang M."/>
            <person name="Dathorne S.R."/>
            <person name="David R."/>
            <person name="Davis C.M."/>
            <person name="Davy-Carroll L."/>
            <person name="Deshazo D.R."/>
            <person name="Donlin J.E."/>
            <person name="D'Souza L."/>
            <person name="Eaves K.A."/>
            <person name="Egan A."/>
            <person name="Emery-Cohen A.J."/>
            <person name="Escotto M."/>
            <person name="Flagg N."/>
            <person name="Forbes L.D."/>
            <person name="Gabisi A.M."/>
            <person name="Garza M."/>
            <person name="Hamilton C."/>
            <person name="Henderson N."/>
            <person name="Hernandez O."/>
            <person name="Hines S."/>
            <person name="Hogues M.E."/>
            <person name="Huang M."/>
            <person name="Idlebird D.G."/>
            <person name="Johnson R."/>
            <person name="Jolivet A."/>
            <person name="Jones S."/>
            <person name="Kagan R."/>
            <person name="King L.M."/>
            <person name="Leal B."/>
            <person name="Lebow H."/>
            <person name="Lee S."/>
            <person name="LeVan J.M."/>
            <person name="Lewis L.C."/>
            <person name="London P."/>
            <person name="Lorensuhewa L.M."/>
            <person name="Loulseged H."/>
            <person name="Lovett D.A."/>
            <person name="Lucier A."/>
            <person name="Lucier R.L."/>
            <person name="Ma J."/>
            <person name="Madu R.C."/>
            <person name="Mapua P."/>
            <person name="Martindale A.D."/>
            <person name="Martinez E."/>
            <person name="Massey E."/>
            <person name="Mawhiney S."/>
            <person name="Meador M.G."/>
            <person name="Mendez S."/>
            <person name="Mercado C."/>
            <person name="Mercado I.C."/>
            <person name="Merritt C.E."/>
            <person name="Miner Z.L."/>
            <person name="Minja E."/>
            <person name="Mitchell T."/>
            <person name="Mohabbat F."/>
            <person name="Mohabbat K."/>
            <person name="Montgomery B."/>
            <person name="Moore N."/>
            <person name="Morris S."/>
            <person name="Munidasa M."/>
            <person name="Ngo R.N."/>
            <person name="Nguyen N.B."/>
            <person name="Nickerson E."/>
            <person name="Nwaokelemeh O.O."/>
            <person name="Nwokenkwo S."/>
            <person name="Obregon M."/>
            <person name="Oguh M."/>
            <person name="Oragunye N."/>
            <person name="Oviedo R.J."/>
            <person name="Parish B.J."/>
            <person name="Parker D.N."/>
            <person name="Parrish J."/>
            <person name="Parks K.L."/>
            <person name="Paul H.A."/>
            <person name="Payton B.A."/>
            <person name="Perez A."/>
            <person name="Perrin W."/>
            <person name="Pickens A."/>
            <person name="Primus E.L."/>
            <person name="Pu L.-L."/>
            <person name="Puazo M."/>
            <person name="Quiles M.M."/>
            <person name="Quiroz J.B."/>
            <person name="Rabata D."/>
            <person name="Reeves K."/>
            <person name="Ruiz S.J."/>
            <person name="Shao H."/>
            <person name="Sisson I."/>
            <person name="Sonaike T."/>
            <person name="Sorelle R.P."/>
            <person name="Sutton A.E."/>
            <person name="Svatek A.F."/>
            <person name="Svetz L.A."/>
            <person name="Tamerisa K.S."/>
            <person name="Taylor T.R."/>
            <person name="Teague B."/>
            <person name="Thomas N."/>
            <person name="Thorn R.D."/>
            <person name="Trejos Z.Y."/>
            <person name="Trevino B.K."/>
            <person name="Ukegbu O.N."/>
            <person name="Urban J.B."/>
            <person name="Vasquez L.I."/>
            <person name="Vera V.A."/>
            <person name="Villasana D.M."/>
            <person name="Wang L."/>
            <person name="Ward-Moore S."/>
            <person name="Warren J.T."/>
            <person name="Wei X."/>
            <person name="White F."/>
            <person name="Williamson A.L."/>
            <person name="Wleczyk R."/>
            <person name="Wooden H.S."/>
            <person name="Wooden S.H."/>
            <person name="Yen J."/>
            <person name="Yoon L."/>
            <person name="Yoon V."/>
            <person name="Zorrilla S.E."/>
            <person name="Nelson D."/>
            <person name="Kucherlapati R."/>
            <person name="Weinstock G."/>
            <person name="Gibbs R.A."/>
        </authorList>
    </citation>
    <scope>NUCLEOTIDE SEQUENCE [LARGE SCALE GENOMIC DNA]</scope>
</reference>
<reference key="4">
    <citation type="journal article" date="2004" name="Genome Res.">
        <title>The status, quality, and expansion of the NIH full-length cDNA project: the Mammalian Gene Collection (MGC).</title>
        <authorList>
            <consortium name="The MGC Project Team"/>
        </authorList>
    </citation>
    <scope>NUCLEOTIDE SEQUENCE [LARGE SCALE MRNA] (ISOFORM 1)</scope>
    <scope>VARIANT ILE-901</scope>
    <source>
        <tissue>Cervix</tissue>
        <tissue>Heart</tissue>
        <tissue>Lung</tissue>
        <tissue>Placenta</tissue>
        <tissue>Testis</tissue>
    </source>
</reference>
<reference key="5">
    <citation type="journal article" date="2009" name="Dev. Cell">
        <title>The Arp2/3 activator WASH controls the fission of endosomes through a large multiprotein complex.</title>
        <authorList>
            <person name="Derivery E."/>
            <person name="Sousa C."/>
            <person name="Gautier J.J."/>
            <person name="Lombard B."/>
            <person name="Loew D."/>
            <person name="Gautreau A."/>
        </authorList>
    </citation>
    <scope>FUNCTION OF THE WASH COMPLEX</scope>
    <scope>IDENTIFICATION IN THE WASH COMPLEX</scope>
</reference>
<reference key="6">
    <citation type="journal article" date="2010" name="Proc. Natl. Acad. Sci. U.S.A.">
        <title>WASH and WAVE actin regulators of the Wiskott-Aldrich syndrome protein (WASP) family are controlled by analogous structurally related complexes.</title>
        <authorList>
            <person name="Jia D."/>
            <person name="Gomez T.S."/>
            <person name="Metlagel Z."/>
            <person name="Umetani J."/>
            <person name="Otwinowski Z."/>
            <person name="Rosen M.K."/>
            <person name="Billadeau D.D."/>
        </authorList>
    </citation>
    <scope>IDENTIFICATION IN THE WASH CORE COMPLEX</scope>
    <scope>FUNCTION OF THE WASH CORE COMPLEX</scope>
    <scope>INTERACTION WITH WASHC5</scope>
</reference>
<reference key="7">
    <citation type="journal article" date="2010" name="Sci. Signal.">
        <title>Quantitative phosphoproteomics reveals widespread full phosphorylation site occupancy during mitosis.</title>
        <authorList>
            <person name="Olsen J.V."/>
            <person name="Vermeulen M."/>
            <person name="Santamaria A."/>
            <person name="Kumar C."/>
            <person name="Miller M.L."/>
            <person name="Jensen L.J."/>
            <person name="Gnad F."/>
            <person name="Cox J."/>
            <person name="Jensen T.S."/>
            <person name="Nigg E.A."/>
            <person name="Brunak S."/>
            <person name="Mann M."/>
        </authorList>
    </citation>
    <scope>ACETYLATION [LARGE SCALE ANALYSIS] AT ALA-2</scope>
    <scope>PHOSPHORYLATION [LARGE SCALE ANALYSIS] AT SER-7</scope>
    <scope>CLEAVAGE OF INITIATOR METHIONINE [LARGE SCALE ANALYSIS]</scope>
    <scope>IDENTIFICATION BY MASS SPECTROMETRY [LARGE SCALE ANALYSIS]</scope>
    <source>
        <tissue>Cervix carcinoma</tissue>
    </source>
</reference>
<reference key="8">
    <citation type="journal article" date="2011" name="Hum. Mol. Genet.">
        <title>Identification of a novel candidate gene for non-syndromic autosomal recessive intellectual disability: the WASH complex member SWIP.</title>
        <authorList>
            <person name="Ropers F."/>
            <person name="Derivery E."/>
            <person name="Hu H."/>
            <person name="Garshasbi M."/>
            <person name="Karbasiyan M."/>
            <person name="Herold M."/>
            <person name="Nurnberg G."/>
            <person name="Ullmann R."/>
            <person name="Gautreau A."/>
            <person name="Sperling K."/>
            <person name="Varon R."/>
            <person name="Rajab A."/>
        </authorList>
    </citation>
    <scope>FUNCTION</scope>
    <scope>IDENTIFICATION IN THE WASH COMPLEX</scope>
    <scope>INVOLVEMENT IN MRT43</scope>
    <scope>VARIANT MRT43 ARG-1019</scope>
    <scope>CHARACTERIZATION OF VARIANT MRT43 ARG-1019</scope>
</reference>
<reference key="9">
    <citation type="journal article" date="2011" name="Sci. Signal.">
        <title>System-wide temporal characterization of the proteome and phosphoproteome of human embryonic stem cell differentiation.</title>
        <authorList>
            <person name="Rigbolt K.T."/>
            <person name="Prokhorova T.A."/>
            <person name="Akimov V."/>
            <person name="Henningsen J."/>
            <person name="Johansen P.T."/>
            <person name="Kratchmarova I."/>
            <person name="Kassem M."/>
            <person name="Mann M."/>
            <person name="Olsen J.V."/>
            <person name="Blagoev B."/>
        </authorList>
    </citation>
    <scope>IDENTIFICATION BY MASS SPECTROMETRY [LARGE SCALE ANALYSIS]</scope>
</reference>
<reference key="10">
    <citation type="journal article" date="2013" name="J. Proteome Res.">
        <title>Toward a comprehensive characterization of a human cancer cell phosphoproteome.</title>
        <authorList>
            <person name="Zhou H."/>
            <person name="Di Palma S."/>
            <person name="Preisinger C."/>
            <person name="Peng M."/>
            <person name="Polat A.N."/>
            <person name="Heck A.J."/>
            <person name="Mohammed S."/>
        </authorList>
    </citation>
    <scope>PHOSPHORYLATION [LARGE SCALE ANALYSIS] AT THR-1154</scope>
    <scope>IDENTIFICATION BY MASS SPECTROMETRY [LARGE SCALE ANALYSIS]</scope>
    <source>
        <tissue>Cervix carcinoma</tissue>
        <tissue>Erythroleukemia</tissue>
    </source>
</reference>
<reference key="11">
    <citation type="journal article" date="2013" name="Mol. Biol. Cell">
        <title>The WASH complex, an endosomal Arp2/3 activator, interacts with the Hermansky-Pudlak syndrome complex BLOC-1 and its cargo phosphatidylinositol-4-kinase type IIalpha.</title>
        <authorList>
            <person name="Ryder P.V."/>
            <person name="Vistein R."/>
            <person name="Gokhale A."/>
            <person name="Seaman M.N."/>
            <person name="Puthenveedu M.A."/>
            <person name="Faundez V."/>
        </authorList>
    </citation>
    <scope>SUBCELLULAR LOCATION</scope>
</reference>
<reference key="12">
    <citation type="journal article" date="2011" name="BMC Syst. Biol.">
        <title>Initial characterization of the human central proteome.</title>
        <authorList>
            <person name="Burkard T.R."/>
            <person name="Planyavsky M."/>
            <person name="Kaupe I."/>
            <person name="Breitwieser F.P."/>
            <person name="Buerckstuemmer T."/>
            <person name="Bennett K.L."/>
            <person name="Superti-Furga G."/>
            <person name="Colinge J."/>
        </authorList>
    </citation>
    <scope>VARIANT [LARGE SCALE ANALYSIS] ILE-901</scope>
    <scope>IDENTIFICATION BY MASS SPECTROMETRY [LARGE SCALE ANALYSIS]</scope>
</reference>
<accession>Q2M389</accession>
<accession>Q2NL83</accession>
<accession>Q8IW61</accession>
<accession>Q8N5W7</accession>
<accession>Q9NVD6</accession>
<accession>Q9UPW7</accession>